<accession>P76170</accession>
<accession>Q2MB79</accession>
<name>YNFB_ECOLI</name>
<keyword id="KW-1185">Reference proteome</keyword>
<keyword id="KW-0732">Signal</keyword>
<reference key="1">
    <citation type="journal article" date="1997" name="Science">
        <title>The complete genome sequence of Escherichia coli K-12.</title>
        <authorList>
            <person name="Blattner F.R."/>
            <person name="Plunkett G. III"/>
            <person name="Bloch C.A."/>
            <person name="Perna N.T."/>
            <person name="Burland V."/>
            <person name="Riley M."/>
            <person name="Collado-Vides J."/>
            <person name="Glasner J.D."/>
            <person name="Rode C.K."/>
            <person name="Mayhew G.F."/>
            <person name="Gregor J."/>
            <person name="Davis N.W."/>
            <person name="Kirkpatrick H.A."/>
            <person name="Goeden M.A."/>
            <person name="Rose D.J."/>
            <person name="Mau B."/>
            <person name="Shao Y."/>
        </authorList>
    </citation>
    <scope>NUCLEOTIDE SEQUENCE [LARGE SCALE GENOMIC DNA]</scope>
    <source>
        <strain>K12 / MG1655 / ATCC 47076</strain>
    </source>
</reference>
<reference key="2">
    <citation type="journal article" date="2006" name="Mol. Syst. Biol.">
        <title>Highly accurate genome sequences of Escherichia coli K-12 strains MG1655 and W3110.</title>
        <authorList>
            <person name="Hayashi K."/>
            <person name="Morooka N."/>
            <person name="Yamamoto Y."/>
            <person name="Fujita K."/>
            <person name="Isono K."/>
            <person name="Choi S."/>
            <person name="Ohtsubo E."/>
            <person name="Baba T."/>
            <person name="Wanner B.L."/>
            <person name="Mori H."/>
            <person name="Horiuchi T."/>
        </authorList>
    </citation>
    <scope>NUCLEOTIDE SEQUENCE [LARGE SCALE GENOMIC DNA]</scope>
    <source>
        <strain>K12 / W3110 / ATCC 27325 / DSM 5911</strain>
    </source>
</reference>
<gene>
    <name evidence="1" type="primary">ynfB</name>
    <name type="ordered locus">b1583</name>
    <name type="ordered locus">JW1575</name>
</gene>
<proteinExistence type="evidence at protein level"/>
<protein>
    <recommendedName>
        <fullName evidence="1">UPF0482 protein YnfB</fullName>
    </recommendedName>
</protein>
<dbReference type="EMBL" id="U00096">
    <property type="protein sequence ID" value="AAC74655.1"/>
    <property type="molecule type" value="Genomic_DNA"/>
</dbReference>
<dbReference type="EMBL" id="AP009048">
    <property type="protein sequence ID" value="BAE76477.1"/>
    <property type="molecule type" value="Genomic_DNA"/>
</dbReference>
<dbReference type="PIR" id="A64914">
    <property type="entry name" value="A64914"/>
</dbReference>
<dbReference type="RefSeq" id="NP_416100.1">
    <property type="nucleotide sequence ID" value="NC_000913.3"/>
</dbReference>
<dbReference type="RefSeq" id="WP_000705211.1">
    <property type="nucleotide sequence ID" value="NZ_STEB01000003.1"/>
</dbReference>
<dbReference type="BioGRID" id="4260818">
    <property type="interactions" value="30"/>
</dbReference>
<dbReference type="DIP" id="DIP-12762N"/>
<dbReference type="FunCoup" id="P76170">
    <property type="interactions" value="91"/>
</dbReference>
<dbReference type="IntAct" id="P76170">
    <property type="interactions" value="3"/>
</dbReference>
<dbReference type="STRING" id="511145.b1583"/>
<dbReference type="jPOST" id="P76170"/>
<dbReference type="PaxDb" id="511145-b1583"/>
<dbReference type="EnsemblBacteria" id="AAC74655">
    <property type="protein sequence ID" value="AAC74655"/>
    <property type="gene ID" value="b1583"/>
</dbReference>
<dbReference type="GeneID" id="946119"/>
<dbReference type="KEGG" id="ecj:JW1575"/>
<dbReference type="KEGG" id="eco:b1583"/>
<dbReference type="KEGG" id="ecoc:C3026_09125"/>
<dbReference type="PATRIC" id="fig|511145.12.peg.1654"/>
<dbReference type="EchoBASE" id="EB3601"/>
<dbReference type="eggNOG" id="ENOG5032SRB">
    <property type="taxonomic scope" value="Bacteria"/>
</dbReference>
<dbReference type="HOGENOM" id="CLU_167574_0_0_6"/>
<dbReference type="InParanoid" id="P76170"/>
<dbReference type="OMA" id="EPNTERC"/>
<dbReference type="OrthoDB" id="6455281at2"/>
<dbReference type="PhylomeDB" id="P76170"/>
<dbReference type="BioCyc" id="EcoCyc:G6841-MONOMER"/>
<dbReference type="PRO" id="PR:P76170"/>
<dbReference type="Proteomes" id="UP000000625">
    <property type="component" value="Chromosome"/>
</dbReference>
<dbReference type="GO" id="GO:0009279">
    <property type="term" value="C:cell outer membrane"/>
    <property type="evidence" value="ECO:0000314"/>
    <property type="project" value="EcoCyc"/>
</dbReference>
<dbReference type="HAMAP" id="MF_01581">
    <property type="entry name" value="UPF0482"/>
    <property type="match status" value="1"/>
</dbReference>
<dbReference type="InterPro" id="IPR009700">
    <property type="entry name" value="DUF1283"/>
</dbReference>
<dbReference type="NCBIfam" id="NF010180">
    <property type="entry name" value="PRK13659.1"/>
    <property type="match status" value="1"/>
</dbReference>
<dbReference type="Pfam" id="PF06932">
    <property type="entry name" value="DUF1283"/>
    <property type="match status" value="1"/>
</dbReference>
<sequence>MKITLSKRIGLLAILLPCALALSTTVHAETNKLVIESGDSAQSRQHAAMEKEQWNDTRNLRQKVNKRTEKEWDKADAAFDNRDKCEQSANINAYWEPNTLRCLDRRTGRVITP</sequence>
<organism>
    <name type="scientific">Escherichia coli (strain K12)</name>
    <dbReference type="NCBI Taxonomy" id="83333"/>
    <lineage>
        <taxon>Bacteria</taxon>
        <taxon>Pseudomonadati</taxon>
        <taxon>Pseudomonadota</taxon>
        <taxon>Gammaproteobacteria</taxon>
        <taxon>Enterobacterales</taxon>
        <taxon>Enterobacteriaceae</taxon>
        <taxon>Escherichia</taxon>
    </lineage>
</organism>
<feature type="signal peptide" evidence="1">
    <location>
        <begin position="1"/>
        <end position="28"/>
    </location>
</feature>
<feature type="chain" id="PRO_0000013848" description="UPF0482 protein YnfB">
    <location>
        <begin position="29"/>
        <end position="113"/>
    </location>
</feature>
<comment type="interaction">
    <interactant intactId="EBI-544774">
        <id>P76170</id>
    </interactant>
    <interactant intactId="EBI-542683">
        <id>P0AFG8</id>
        <label>aceE</label>
    </interactant>
    <organismsDiffer>false</organismsDiffer>
    <experiments>2</experiments>
</comment>
<comment type="similarity">
    <text evidence="1">Belongs to the UPF0482 family.</text>
</comment>
<evidence type="ECO:0000255" key="1">
    <source>
        <dbReference type="HAMAP-Rule" id="MF_01581"/>
    </source>
</evidence>